<feature type="chain" id="PRO_1000053830" description="Bifunctional protein PyrR">
    <location>
        <begin position="1"/>
        <end position="178"/>
    </location>
</feature>
<feature type="short sequence motif" description="PRPP-binding" evidence="1">
    <location>
        <begin position="99"/>
        <end position="111"/>
    </location>
</feature>
<reference key="1">
    <citation type="journal article" date="2006" name="Genome Res.">
        <title>Skewed genomic variability in strains of the toxigenic bacterial pathogen, Clostridium perfringens.</title>
        <authorList>
            <person name="Myers G.S.A."/>
            <person name="Rasko D.A."/>
            <person name="Cheung J.K."/>
            <person name="Ravel J."/>
            <person name="Seshadri R."/>
            <person name="DeBoy R.T."/>
            <person name="Ren Q."/>
            <person name="Varga J."/>
            <person name="Awad M.M."/>
            <person name="Brinkac L.M."/>
            <person name="Daugherty S.C."/>
            <person name="Haft D.H."/>
            <person name="Dodson R.J."/>
            <person name="Madupu R."/>
            <person name="Nelson W.C."/>
            <person name="Rosovitz M.J."/>
            <person name="Sullivan S.A."/>
            <person name="Khouri H."/>
            <person name="Dimitrov G.I."/>
            <person name="Watkins K.L."/>
            <person name="Mulligan S."/>
            <person name="Benton J."/>
            <person name="Radune D."/>
            <person name="Fisher D.J."/>
            <person name="Atkins H.S."/>
            <person name="Hiscox T."/>
            <person name="Jost B.H."/>
            <person name="Billington S.J."/>
            <person name="Songer J.G."/>
            <person name="McClane B.A."/>
            <person name="Titball R.W."/>
            <person name="Rood J.I."/>
            <person name="Melville S.B."/>
            <person name="Paulsen I.T."/>
        </authorList>
    </citation>
    <scope>NUCLEOTIDE SEQUENCE [LARGE SCALE GENOMIC DNA]</scope>
    <source>
        <strain>SM101 / Type A</strain>
    </source>
</reference>
<keyword id="KW-0328">Glycosyltransferase</keyword>
<keyword id="KW-0694">RNA-binding</keyword>
<keyword id="KW-0804">Transcription</keyword>
<keyword id="KW-0805">Transcription regulation</keyword>
<keyword id="KW-0806">Transcription termination</keyword>
<keyword id="KW-0808">Transferase</keyword>
<accession>Q0SRX5</accession>
<protein>
    <recommendedName>
        <fullName evidence="1">Bifunctional protein PyrR</fullName>
    </recommendedName>
    <domain>
        <recommendedName>
            <fullName evidence="1">Pyrimidine operon regulatory protein</fullName>
        </recommendedName>
    </domain>
    <domain>
        <recommendedName>
            <fullName evidence="1">Uracil phosphoribosyltransferase</fullName>
            <shortName evidence="1">UPRTase</shortName>
            <ecNumber evidence="1">2.4.2.9</ecNumber>
        </recommendedName>
    </domain>
</protein>
<comment type="function">
    <text evidence="1">Regulates transcriptional attenuation of the pyrimidine nucleotide (pyr) operon by binding in a uridine-dependent manner to specific sites on pyr mRNA. This disrupts an antiterminator hairpin in the RNA and favors formation of a downstream transcription terminator, leading to a reduced expression of downstream genes.</text>
</comment>
<comment type="function">
    <text evidence="1">Also displays a weak uracil phosphoribosyltransferase activity which is not physiologically significant.</text>
</comment>
<comment type="catalytic activity">
    <reaction evidence="1">
        <text>UMP + diphosphate = 5-phospho-alpha-D-ribose 1-diphosphate + uracil</text>
        <dbReference type="Rhea" id="RHEA:13017"/>
        <dbReference type="ChEBI" id="CHEBI:17568"/>
        <dbReference type="ChEBI" id="CHEBI:33019"/>
        <dbReference type="ChEBI" id="CHEBI:57865"/>
        <dbReference type="ChEBI" id="CHEBI:58017"/>
        <dbReference type="EC" id="2.4.2.9"/>
    </reaction>
</comment>
<comment type="subunit">
    <text evidence="1">Homodimer and homohexamer; in equilibrium.</text>
</comment>
<comment type="similarity">
    <text evidence="1">Belongs to the purine/pyrimidine phosphoribosyltransferase family. PyrR subfamily.</text>
</comment>
<name>PYRR_CLOPS</name>
<organism>
    <name type="scientific">Clostridium perfringens (strain SM101 / Type A)</name>
    <dbReference type="NCBI Taxonomy" id="289380"/>
    <lineage>
        <taxon>Bacteria</taxon>
        <taxon>Bacillati</taxon>
        <taxon>Bacillota</taxon>
        <taxon>Clostridia</taxon>
        <taxon>Eubacteriales</taxon>
        <taxon>Clostridiaceae</taxon>
        <taxon>Clostridium</taxon>
    </lineage>
</organism>
<proteinExistence type="inferred from homology"/>
<sequence>MHLKASLLDENAIRRALTRLSHEIIEKNKGVEDIVLVGIKRRGYPLAERLSEFIEKFEGVKIPVASVDITLYRDDLTNVSDTPNLNDPKIDVDIRGKKVIIVDDVLYTCRTARAAIDAIMDQGRPEFIQLAVLVDRGHKELPIRADYVGKNIPTSKDEIIKVQIKEIDGTDSVEIYEN</sequence>
<gene>
    <name evidence="1" type="primary">pyrR</name>
    <name type="ordered locus">CPR_1817</name>
</gene>
<dbReference type="EC" id="2.4.2.9" evidence="1"/>
<dbReference type="EMBL" id="CP000312">
    <property type="protein sequence ID" value="ABG85520.1"/>
    <property type="molecule type" value="Genomic_DNA"/>
</dbReference>
<dbReference type="RefSeq" id="WP_003451681.1">
    <property type="nucleotide sequence ID" value="NZ_CAXVKH010000002.1"/>
</dbReference>
<dbReference type="SMR" id="Q0SRX5"/>
<dbReference type="GeneID" id="93001616"/>
<dbReference type="KEGG" id="cpr:CPR_1817"/>
<dbReference type="Proteomes" id="UP000001824">
    <property type="component" value="Chromosome"/>
</dbReference>
<dbReference type="GO" id="GO:0003723">
    <property type="term" value="F:RNA binding"/>
    <property type="evidence" value="ECO:0007669"/>
    <property type="project" value="UniProtKB-UniRule"/>
</dbReference>
<dbReference type="GO" id="GO:0004845">
    <property type="term" value="F:uracil phosphoribosyltransferase activity"/>
    <property type="evidence" value="ECO:0007669"/>
    <property type="project" value="UniProtKB-UniRule"/>
</dbReference>
<dbReference type="GO" id="GO:0006353">
    <property type="term" value="P:DNA-templated transcription termination"/>
    <property type="evidence" value="ECO:0007669"/>
    <property type="project" value="UniProtKB-UniRule"/>
</dbReference>
<dbReference type="CDD" id="cd06223">
    <property type="entry name" value="PRTases_typeI"/>
    <property type="match status" value="1"/>
</dbReference>
<dbReference type="FunFam" id="3.40.50.2020:FF:000020">
    <property type="entry name" value="Bifunctional protein PyrR"/>
    <property type="match status" value="1"/>
</dbReference>
<dbReference type="Gene3D" id="3.40.50.2020">
    <property type="match status" value="1"/>
</dbReference>
<dbReference type="HAMAP" id="MF_01219">
    <property type="entry name" value="PyrR"/>
    <property type="match status" value="1"/>
</dbReference>
<dbReference type="InterPro" id="IPR000836">
    <property type="entry name" value="PRibTrfase_dom"/>
</dbReference>
<dbReference type="InterPro" id="IPR029057">
    <property type="entry name" value="PRTase-like"/>
</dbReference>
<dbReference type="InterPro" id="IPR023050">
    <property type="entry name" value="PyrR"/>
</dbReference>
<dbReference type="InterPro" id="IPR050137">
    <property type="entry name" value="PyrR_bifunctional"/>
</dbReference>
<dbReference type="NCBIfam" id="NF003548">
    <property type="entry name" value="PRK05205.1-4"/>
    <property type="match status" value="1"/>
</dbReference>
<dbReference type="NCBIfam" id="NF003549">
    <property type="entry name" value="PRK05205.1-5"/>
    <property type="match status" value="1"/>
</dbReference>
<dbReference type="PANTHER" id="PTHR11608">
    <property type="entry name" value="BIFUNCTIONAL PROTEIN PYRR"/>
    <property type="match status" value="1"/>
</dbReference>
<dbReference type="PANTHER" id="PTHR11608:SF0">
    <property type="entry name" value="BIFUNCTIONAL PROTEIN PYRR"/>
    <property type="match status" value="1"/>
</dbReference>
<dbReference type="Pfam" id="PF00156">
    <property type="entry name" value="Pribosyltran"/>
    <property type="match status" value="1"/>
</dbReference>
<dbReference type="SUPFAM" id="SSF53271">
    <property type="entry name" value="PRTase-like"/>
    <property type="match status" value="1"/>
</dbReference>
<evidence type="ECO:0000255" key="1">
    <source>
        <dbReference type="HAMAP-Rule" id="MF_01219"/>
    </source>
</evidence>